<evidence type="ECO:0000255" key="1">
    <source>
        <dbReference type="HAMAP-Rule" id="MF_00052"/>
    </source>
</evidence>
<evidence type="ECO:0000255" key="2">
    <source>
        <dbReference type="PROSITE-ProRule" id="PRU01319"/>
    </source>
</evidence>
<gene>
    <name evidence="1" type="primary">rnhB</name>
    <name type="ordered locus">Rsph17029_0120</name>
</gene>
<sequence>MEITCPDWTHETAALAEGFTCVVGVDEVGRGPLAGPVTAAAVRLFPGRIPEGLNDSKKLTALRREMLAAEIHTVAEVSIAHASVEEIDRLNILQASHLAMGRALAGLPSRPDFALIDGHMVPKGLGHRCRAIVKGDALCLSIAAASIVAKVARDRIMVDLEQQHPGYGWRTNAGYGTKDHLQALLNLGPTPHHRRSFKPVHNILYQEASISP</sequence>
<comment type="function">
    <text evidence="1">Endonuclease that specifically degrades the RNA of RNA-DNA hybrids.</text>
</comment>
<comment type="catalytic activity">
    <reaction evidence="1">
        <text>Endonucleolytic cleavage to 5'-phosphomonoester.</text>
        <dbReference type="EC" id="3.1.26.4"/>
    </reaction>
</comment>
<comment type="cofactor">
    <cofactor evidence="1">
        <name>Mn(2+)</name>
        <dbReference type="ChEBI" id="CHEBI:29035"/>
    </cofactor>
    <cofactor evidence="1">
        <name>Mg(2+)</name>
        <dbReference type="ChEBI" id="CHEBI:18420"/>
    </cofactor>
    <text evidence="1">Manganese or magnesium. Binds 1 divalent metal ion per monomer in the absence of substrate. May bind a second metal ion after substrate binding.</text>
</comment>
<comment type="subcellular location">
    <subcellularLocation>
        <location evidence="1">Cytoplasm</location>
    </subcellularLocation>
</comment>
<comment type="similarity">
    <text evidence="1">Belongs to the RNase HII family.</text>
</comment>
<keyword id="KW-0963">Cytoplasm</keyword>
<keyword id="KW-0255">Endonuclease</keyword>
<keyword id="KW-0378">Hydrolase</keyword>
<keyword id="KW-0464">Manganese</keyword>
<keyword id="KW-0479">Metal-binding</keyword>
<keyword id="KW-0540">Nuclease</keyword>
<protein>
    <recommendedName>
        <fullName evidence="1">Ribonuclease HII</fullName>
        <shortName evidence="1">RNase HII</shortName>
        <ecNumber evidence="1">3.1.26.4</ecNumber>
    </recommendedName>
</protein>
<feature type="chain" id="PRO_1000031192" description="Ribonuclease HII">
    <location>
        <begin position="1"/>
        <end position="212"/>
    </location>
</feature>
<feature type="domain" description="RNase H type-2" evidence="2">
    <location>
        <begin position="20"/>
        <end position="209"/>
    </location>
</feature>
<feature type="binding site" evidence="1">
    <location>
        <position position="26"/>
    </location>
    <ligand>
        <name>a divalent metal cation</name>
        <dbReference type="ChEBI" id="CHEBI:60240"/>
    </ligand>
</feature>
<feature type="binding site" evidence="1">
    <location>
        <position position="27"/>
    </location>
    <ligand>
        <name>a divalent metal cation</name>
        <dbReference type="ChEBI" id="CHEBI:60240"/>
    </ligand>
</feature>
<feature type="binding site" evidence="1">
    <location>
        <position position="117"/>
    </location>
    <ligand>
        <name>a divalent metal cation</name>
        <dbReference type="ChEBI" id="CHEBI:60240"/>
    </ligand>
</feature>
<dbReference type="EC" id="3.1.26.4" evidence="1"/>
<dbReference type="EMBL" id="CP000577">
    <property type="protein sequence ID" value="ABN75240.1"/>
    <property type="molecule type" value="Genomic_DNA"/>
</dbReference>
<dbReference type="RefSeq" id="WP_011840182.1">
    <property type="nucleotide sequence ID" value="NC_009049.1"/>
</dbReference>
<dbReference type="SMR" id="A3PFX4"/>
<dbReference type="KEGG" id="rsh:Rsph17029_0120"/>
<dbReference type="HOGENOM" id="CLU_036532_3_2_5"/>
<dbReference type="GO" id="GO:0005737">
    <property type="term" value="C:cytoplasm"/>
    <property type="evidence" value="ECO:0007669"/>
    <property type="project" value="UniProtKB-SubCell"/>
</dbReference>
<dbReference type="GO" id="GO:0032299">
    <property type="term" value="C:ribonuclease H2 complex"/>
    <property type="evidence" value="ECO:0007669"/>
    <property type="project" value="TreeGrafter"/>
</dbReference>
<dbReference type="GO" id="GO:0030145">
    <property type="term" value="F:manganese ion binding"/>
    <property type="evidence" value="ECO:0007669"/>
    <property type="project" value="UniProtKB-UniRule"/>
</dbReference>
<dbReference type="GO" id="GO:0003723">
    <property type="term" value="F:RNA binding"/>
    <property type="evidence" value="ECO:0007669"/>
    <property type="project" value="InterPro"/>
</dbReference>
<dbReference type="GO" id="GO:0004523">
    <property type="term" value="F:RNA-DNA hybrid ribonuclease activity"/>
    <property type="evidence" value="ECO:0007669"/>
    <property type="project" value="UniProtKB-UniRule"/>
</dbReference>
<dbReference type="GO" id="GO:0043137">
    <property type="term" value="P:DNA replication, removal of RNA primer"/>
    <property type="evidence" value="ECO:0007669"/>
    <property type="project" value="TreeGrafter"/>
</dbReference>
<dbReference type="GO" id="GO:0006298">
    <property type="term" value="P:mismatch repair"/>
    <property type="evidence" value="ECO:0007669"/>
    <property type="project" value="TreeGrafter"/>
</dbReference>
<dbReference type="CDD" id="cd07182">
    <property type="entry name" value="RNase_HII_bacteria_HII_like"/>
    <property type="match status" value="1"/>
</dbReference>
<dbReference type="Gene3D" id="3.30.420.10">
    <property type="entry name" value="Ribonuclease H-like superfamily/Ribonuclease H"/>
    <property type="match status" value="1"/>
</dbReference>
<dbReference type="HAMAP" id="MF_00052_B">
    <property type="entry name" value="RNase_HII_B"/>
    <property type="match status" value="1"/>
</dbReference>
<dbReference type="InterPro" id="IPR022898">
    <property type="entry name" value="RNase_HII"/>
</dbReference>
<dbReference type="InterPro" id="IPR001352">
    <property type="entry name" value="RNase_HII/HIII"/>
</dbReference>
<dbReference type="InterPro" id="IPR024567">
    <property type="entry name" value="RNase_HII/HIII_dom"/>
</dbReference>
<dbReference type="InterPro" id="IPR012337">
    <property type="entry name" value="RNaseH-like_sf"/>
</dbReference>
<dbReference type="InterPro" id="IPR036397">
    <property type="entry name" value="RNaseH_sf"/>
</dbReference>
<dbReference type="NCBIfam" id="NF000595">
    <property type="entry name" value="PRK00015.1-3"/>
    <property type="match status" value="1"/>
</dbReference>
<dbReference type="PANTHER" id="PTHR10954">
    <property type="entry name" value="RIBONUCLEASE H2 SUBUNIT A"/>
    <property type="match status" value="1"/>
</dbReference>
<dbReference type="PANTHER" id="PTHR10954:SF18">
    <property type="entry name" value="RIBONUCLEASE HII"/>
    <property type="match status" value="1"/>
</dbReference>
<dbReference type="Pfam" id="PF01351">
    <property type="entry name" value="RNase_HII"/>
    <property type="match status" value="1"/>
</dbReference>
<dbReference type="SUPFAM" id="SSF53098">
    <property type="entry name" value="Ribonuclease H-like"/>
    <property type="match status" value="1"/>
</dbReference>
<dbReference type="PROSITE" id="PS51975">
    <property type="entry name" value="RNASE_H_2"/>
    <property type="match status" value="1"/>
</dbReference>
<proteinExistence type="inferred from homology"/>
<organism>
    <name type="scientific">Cereibacter sphaeroides (strain ATCC 17029 / ATH 2.4.9)</name>
    <name type="common">Rhodobacter sphaeroides</name>
    <dbReference type="NCBI Taxonomy" id="349101"/>
    <lineage>
        <taxon>Bacteria</taxon>
        <taxon>Pseudomonadati</taxon>
        <taxon>Pseudomonadota</taxon>
        <taxon>Alphaproteobacteria</taxon>
        <taxon>Rhodobacterales</taxon>
        <taxon>Paracoccaceae</taxon>
        <taxon>Cereibacter</taxon>
    </lineage>
</organism>
<reference key="1">
    <citation type="submission" date="2007-02" db="EMBL/GenBank/DDBJ databases">
        <title>Complete sequence of chromosome 1 of Rhodobacter sphaeroides ATCC 17029.</title>
        <authorList>
            <person name="Copeland A."/>
            <person name="Lucas S."/>
            <person name="Lapidus A."/>
            <person name="Barry K."/>
            <person name="Detter J.C."/>
            <person name="Glavina del Rio T."/>
            <person name="Hammon N."/>
            <person name="Israni S."/>
            <person name="Dalin E."/>
            <person name="Tice H."/>
            <person name="Pitluck S."/>
            <person name="Kiss H."/>
            <person name="Brettin T."/>
            <person name="Bruce D."/>
            <person name="Han C."/>
            <person name="Tapia R."/>
            <person name="Gilna P."/>
            <person name="Schmutz J."/>
            <person name="Larimer F."/>
            <person name="Land M."/>
            <person name="Hauser L."/>
            <person name="Kyrpides N."/>
            <person name="Mikhailova N."/>
            <person name="Richardson P."/>
            <person name="Mackenzie C."/>
            <person name="Choudhary M."/>
            <person name="Donohue T.J."/>
            <person name="Kaplan S."/>
        </authorList>
    </citation>
    <scope>NUCLEOTIDE SEQUENCE [LARGE SCALE GENOMIC DNA]</scope>
    <source>
        <strain>ATCC 17029 / ATH 2.4.9</strain>
    </source>
</reference>
<name>RNH2_CERS1</name>
<accession>A3PFX4</accession>